<keyword id="KW-0489">Methyltransferase</keyword>
<keyword id="KW-1185">Reference proteome</keyword>
<keyword id="KW-0949">S-adenosyl-L-methionine</keyword>
<keyword id="KW-0808">Transferase</keyword>
<keyword id="KW-0819">tRNA processing</keyword>
<reference key="1">
    <citation type="journal article" date="2004" name="Proc. Natl. Acad. Sci. U.S.A.">
        <title>Genome sequence of the enterobacterial phytopathogen Erwinia carotovora subsp. atroseptica and characterization of virulence factors.</title>
        <authorList>
            <person name="Bell K.S."/>
            <person name="Sebaihia M."/>
            <person name="Pritchard L."/>
            <person name="Holden M.T.G."/>
            <person name="Hyman L.J."/>
            <person name="Holeva M.C."/>
            <person name="Thomson N.R."/>
            <person name="Bentley S.D."/>
            <person name="Churcher L.J.C."/>
            <person name="Mungall K."/>
            <person name="Atkin R."/>
            <person name="Bason N."/>
            <person name="Brooks K."/>
            <person name="Chillingworth T."/>
            <person name="Clark K."/>
            <person name="Doggett J."/>
            <person name="Fraser A."/>
            <person name="Hance Z."/>
            <person name="Hauser H."/>
            <person name="Jagels K."/>
            <person name="Moule S."/>
            <person name="Norbertczak H."/>
            <person name="Ormond D."/>
            <person name="Price C."/>
            <person name="Quail M.A."/>
            <person name="Sanders M."/>
            <person name="Walker D."/>
            <person name="Whitehead S."/>
            <person name="Salmond G.P.C."/>
            <person name="Birch P.R.J."/>
            <person name="Parkhill J."/>
            <person name="Toth I.K."/>
        </authorList>
    </citation>
    <scope>NUCLEOTIDE SEQUENCE [LARGE SCALE GENOMIC DNA]</scope>
    <source>
        <strain>SCRI 1043 / ATCC BAA-672</strain>
    </source>
</reference>
<sequence>MINNVISPEFDENGRPMRRIRSFVRRQGRLTNGQQLALDNYWPVMGVEYQTEPVDFNALFGRDAPVVLEIGFGMGASLVTMAAQHPEQNFLGIEVHLPGVGACLASAQDVEISNLRVMCHDALEVLMKMIPDSSLSMVQLFFPDPWHKVRHNKRRIVQAPFVELVQSKLKVGGVFHMATDWEPYARHMLKVMTSVAGYRNLSDNNEYVVRPESRPLTKFEARGQRLGHGVWDLMFERIK</sequence>
<feature type="chain" id="PRO_0000171330" description="tRNA (guanine-N(7)-)-methyltransferase">
    <location>
        <begin position="1"/>
        <end position="239"/>
    </location>
</feature>
<feature type="region of interest" description="Interaction with RNA" evidence="2">
    <location>
        <begin position="150"/>
        <end position="155"/>
    </location>
</feature>
<feature type="active site" evidence="1">
    <location>
        <position position="144"/>
    </location>
</feature>
<feature type="binding site" evidence="2">
    <location>
        <position position="69"/>
    </location>
    <ligand>
        <name>S-adenosyl-L-methionine</name>
        <dbReference type="ChEBI" id="CHEBI:59789"/>
    </ligand>
</feature>
<feature type="binding site" evidence="2">
    <location>
        <position position="94"/>
    </location>
    <ligand>
        <name>S-adenosyl-L-methionine</name>
        <dbReference type="ChEBI" id="CHEBI:59789"/>
    </ligand>
</feature>
<feature type="binding site" evidence="2">
    <location>
        <position position="121"/>
    </location>
    <ligand>
        <name>S-adenosyl-L-methionine</name>
        <dbReference type="ChEBI" id="CHEBI:59789"/>
    </ligand>
</feature>
<feature type="binding site" evidence="2">
    <location>
        <position position="144"/>
    </location>
    <ligand>
        <name>S-adenosyl-L-methionine</name>
        <dbReference type="ChEBI" id="CHEBI:59789"/>
    </ligand>
</feature>
<feature type="binding site" evidence="2">
    <location>
        <position position="148"/>
    </location>
    <ligand>
        <name>substrate</name>
    </ligand>
</feature>
<feature type="binding site" evidence="2">
    <location>
        <position position="180"/>
    </location>
    <ligand>
        <name>substrate</name>
    </ligand>
</feature>
<feature type="binding site" evidence="2">
    <location>
        <begin position="217"/>
        <end position="220"/>
    </location>
    <ligand>
        <name>substrate</name>
    </ligand>
</feature>
<protein>
    <recommendedName>
        <fullName evidence="2">tRNA (guanine-N(7)-)-methyltransferase</fullName>
        <ecNumber evidence="2">2.1.1.33</ecNumber>
    </recommendedName>
    <alternativeName>
        <fullName evidence="2">tRNA (guanine(46)-N(7))-methyltransferase</fullName>
    </alternativeName>
    <alternativeName>
        <fullName evidence="2">tRNA(m7G46)-methyltransferase</fullName>
    </alternativeName>
</protein>
<gene>
    <name evidence="2" type="primary">trmB</name>
    <name type="ordered locus">ECA0977</name>
</gene>
<proteinExistence type="inferred from homology"/>
<dbReference type="EC" id="2.1.1.33" evidence="2"/>
<dbReference type="EMBL" id="BX950851">
    <property type="protein sequence ID" value="CAG73888.1"/>
    <property type="molecule type" value="Genomic_DNA"/>
</dbReference>
<dbReference type="RefSeq" id="WP_011092577.1">
    <property type="nucleotide sequence ID" value="NC_004547.2"/>
</dbReference>
<dbReference type="SMR" id="Q6D8J7"/>
<dbReference type="STRING" id="218491.ECA0977"/>
<dbReference type="GeneID" id="57207804"/>
<dbReference type="KEGG" id="eca:ECA0977"/>
<dbReference type="PATRIC" id="fig|218491.5.peg.983"/>
<dbReference type="eggNOG" id="COG0220">
    <property type="taxonomic scope" value="Bacteria"/>
</dbReference>
<dbReference type="HOGENOM" id="CLU_050910_0_1_6"/>
<dbReference type="OrthoDB" id="9802090at2"/>
<dbReference type="UniPathway" id="UPA00989"/>
<dbReference type="Proteomes" id="UP000007966">
    <property type="component" value="Chromosome"/>
</dbReference>
<dbReference type="GO" id="GO:0043527">
    <property type="term" value="C:tRNA methyltransferase complex"/>
    <property type="evidence" value="ECO:0007669"/>
    <property type="project" value="TreeGrafter"/>
</dbReference>
<dbReference type="GO" id="GO:0008176">
    <property type="term" value="F:tRNA (guanine(46)-N7)-methyltransferase activity"/>
    <property type="evidence" value="ECO:0007669"/>
    <property type="project" value="UniProtKB-UniRule"/>
</dbReference>
<dbReference type="FunFam" id="3.40.50.150:FF:000024">
    <property type="entry name" value="tRNA (guanine-N(7)-)-methyltransferase"/>
    <property type="match status" value="1"/>
</dbReference>
<dbReference type="Gene3D" id="3.40.50.150">
    <property type="entry name" value="Vaccinia Virus protein VP39"/>
    <property type="match status" value="1"/>
</dbReference>
<dbReference type="HAMAP" id="MF_01057">
    <property type="entry name" value="tRNA_methyltr_TrmB"/>
    <property type="match status" value="1"/>
</dbReference>
<dbReference type="InterPro" id="IPR029063">
    <property type="entry name" value="SAM-dependent_MTases_sf"/>
</dbReference>
<dbReference type="InterPro" id="IPR003358">
    <property type="entry name" value="tRNA_(Gua-N-7)_MeTrfase_Trmb"/>
</dbReference>
<dbReference type="InterPro" id="IPR055361">
    <property type="entry name" value="tRNA_methyltr_TrmB_bact"/>
</dbReference>
<dbReference type="NCBIfam" id="TIGR00091">
    <property type="entry name" value="tRNA (guanosine(46)-N7)-methyltransferase TrmB"/>
    <property type="match status" value="1"/>
</dbReference>
<dbReference type="PANTHER" id="PTHR23417">
    <property type="entry name" value="3-DEOXY-D-MANNO-OCTULOSONIC-ACID TRANSFERASE/TRNA GUANINE-N 7 - -METHYLTRANSFERASE"/>
    <property type="match status" value="1"/>
</dbReference>
<dbReference type="PANTHER" id="PTHR23417:SF14">
    <property type="entry name" value="PENTACOTRIPEPTIDE-REPEAT REGION OF PRORP DOMAIN-CONTAINING PROTEIN"/>
    <property type="match status" value="1"/>
</dbReference>
<dbReference type="Pfam" id="PF02390">
    <property type="entry name" value="Methyltransf_4"/>
    <property type="match status" value="1"/>
</dbReference>
<dbReference type="SUPFAM" id="SSF53335">
    <property type="entry name" value="S-adenosyl-L-methionine-dependent methyltransferases"/>
    <property type="match status" value="1"/>
</dbReference>
<dbReference type="PROSITE" id="PS51625">
    <property type="entry name" value="SAM_MT_TRMB"/>
    <property type="match status" value="1"/>
</dbReference>
<comment type="function">
    <text evidence="2">Catalyzes the formation of N(7)-methylguanine at position 46 (m7G46) in tRNA.</text>
</comment>
<comment type="catalytic activity">
    <reaction evidence="2">
        <text>guanosine(46) in tRNA + S-adenosyl-L-methionine = N(7)-methylguanosine(46) in tRNA + S-adenosyl-L-homocysteine</text>
        <dbReference type="Rhea" id="RHEA:42708"/>
        <dbReference type="Rhea" id="RHEA-COMP:10188"/>
        <dbReference type="Rhea" id="RHEA-COMP:10189"/>
        <dbReference type="ChEBI" id="CHEBI:57856"/>
        <dbReference type="ChEBI" id="CHEBI:59789"/>
        <dbReference type="ChEBI" id="CHEBI:74269"/>
        <dbReference type="ChEBI" id="CHEBI:74480"/>
        <dbReference type="EC" id="2.1.1.33"/>
    </reaction>
</comment>
<comment type="pathway">
    <text evidence="2">tRNA modification; N(7)-methylguanine-tRNA biosynthesis.</text>
</comment>
<comment type="subunit">
    <text evidence="2">Monomer.</text>
</comment>
<comment type="similarity">
    <text evidence="2">Belongs to the class I-like SAM-binding methyltransferase superfamily. TrmB family.</text>
</comment>
<name>TRMB_PECAS</name>
<organism>
    <name type="scientific">Pectobacterium atrosepticum (strain SCRI 1043 / ATCC BAA-672)</name>
    <name type="common">Erwinia carotovora subsp. atroseptica</name>
    <dbReference type="NCBI Taxonomy" id="218491"/>
    <lineage>
        <taxon>Bacteria</taxon>
        <taxon>Pseudomonadati</taxon>
        <taxon>Pseudomonadota</taxon>
        <taxon>Gammaproteobacteria</taxon>
        <taxon>Enterobacterales</taxon>
        <taxon>Pectobacteriaceae</taxon>
        <taxon>Pectobacterium</taxon>
    </lineage>
</organism>
<accession>Q6D8J7</accession>
<evidence type="ECO:0000250" key="1"/>
<evidence type="ECO:0000255" key="2">
    <source>
        <dbReference type="HAMAP-Rule" id="MF_01057"/>
    </source>
</evidence>